<comment type="function">
    <text evidence="1">Catalyzes the irreversible transfer of a propylamine group from the amino donor S-adenosylmethioninamine (decarboxy-AdoMet) to putrescine (1,4-diaminobutane) to yield spermidine.</text>
</comment>
<comment type="catalytic activity">
    <reaction evidence="1">
        <text>S-adenosyl 3-(methylsulfanyl)propylamine + putrescine = S-methyl-5'-thioadenosine + spermidine + H(+)</text>
        <dbReference type="Rhea" id="RHEA:12721"/>
        <dbReference type="ChEBI" id="CHEBI:15378"/>
        <dbReference type="ChEBI" id="CHEBI:17509"/>
        <dbReference type="ChEBI" id="CHEBI:57443"/>
        <dbReference type="ChEBI" id="CHEBI:57834"/>
        <dbReference type="ChEBI" id="CHEBI:326268"/>
        <dbReference type="EC" id="2.5.1.16"/>
    </reaction>
</comment>
<comment type="pathway">
    <text evidence="1">Amine and polyamine biosynthesis; spermidine biosynthesis; spermidine from putrescine: step 1/1.</text>
</comment>
<comment type="subunit">
    <text evidence="1">Homodimer or homotetramer.</text>
</comment>
<comment type="subcellular location">
    <subcellularLocation>
        <location evidence="1">Cytoplasm</location>
    </subcellularLocation>
</comment>
<comment type="similarity">
    <text evidence="1">Belongs to the spermidine/spermine synthase family.</text>
</comment>
<sequence length="312" mass="34892">MSSPRSFFWVQEYFTPWDYTARAVTRILAYRKTPFQEMLIAETGAFGKGLMLDGHWQSTTVDEFLYHEALVHPAMVQVVQAGGIPRRVLVLGGAEGATLREVLRWRSVEQVVMVDIDGEVVAACREHLPEMHQGSFEDPRVEVVIADALDFLQETGPIWDVILSDLSDPIESGPAYRLFTQEFFRQIRSKLQPDGAFTIQAGPTGPVELHQHTRIVRTLKTVFAAVQPYAIYAPTYGGPLGFALAAQDPISPRPEPEQIDQILSQQLDPERGALQFIDGITLLGLYQVPAHLRRAIAAETVVYTLDNPPRIE</sequence>
<organism>
    <name type="scientific">Synechococcus sp. (strain JA-2-3B'a(2-13))</name>
    <name type="common">Cyanobacteria bacterium Yellowstone B-Prime</name>
    <dbReference type="NCBI Taxonomy" id="321332"/>
    <lineage>
        <taxon>Bacteria</taxon>
        <taxon>Bacillati</taxon>
        <taxon>Cyanobacteriota</taxon>
        <taxon>Cyanophyceae</taxon>
        <taxon>Synechococcales</taxon>
        <taxon>Synechococcaceae</taxon>
        <taxon>Synechococcus</taxon>
    </lineage>
</organism>
<protein>
    <recommendedName>
        <fullName evidence="1">Polyamine aminopropyltransferase</fullName>
    </recommendedName>
    <alternativeName>
        <fullName evidence="1">Putrescine aminopropyltransferase</fullName>
        <shortName evidence="1">PAPT</shortName>
    </alternativeName>
    <alternativeName>
        <fullName evidence="1">Spermidine synthase</fullName>
        <shortName evidence="1">SPDS</shortName>
        <shortName evidence="1">SPDSY</shortName>
        <ecNumber evidence="1">2.5.1.16</ecNumber>
    </alternativeName>
</protein>
<dbReference type="EC" id="2.5.1.16" evidence="1"/>
<dbReference type="EMBL" id="CP000240">
    <property type="protein sequence ID" value="ABD01059.1"/>
    <property type="molecule type" value="Genomic_DNA"/>
</dbReference>
<dbReference type="RefSeq" id="WP_011431730.1">
    <property type="nucleotide sequence ID" value="NC_007776.1"/>
</dbReference>
<dbReference type="SMR" id="Q2JQ57"/>
<dbReference type="STRING" id="321332.CYB_0058"/>
<dbReference type="KEGG" id="cyb:CYB_0058"/>
<dbReference type="eggNOG" id="COG0421">
    <property type="taxonomic scope" value="Bacteria"/>
</dbReference>
<dbReference type="HOGENOM" id="CLU_048199_0_1_3"/>
<dbReference type="OrthoDB" id="9793120at2"/>
<dbReference type="UniPathway" id="UPA00248">
    <property type="reaction ID" value="UER00314"/>
</dbReference>
<dbReference type="Proteomes" id="UP000001938">
    <property type="component" value="Chromosome"/>
</dbReference>
<dbReference type="GO" id="GO:0005737">
    <property type="term" value="C:cytoplasm"/>
    <property type="evidence" value="ECO:0007669"/>
    <property type="project" value="UniProtKB-SubCell"/>
</dbReference>
<dbReference type="GO" id="GO:0004766">
    <property type="term" value="F:spermidine synthase activity"/>
    <property type="evidence" value="ECO:0007669"/>
    <property type="project" value="UniProtKB-UniRule"/>
</dbReference>
<dbReference type="GO" id="GO:0010487">
    <property type="term" value="F:thermospermine synthase activity"/>
    <property type="evidence" value="ECO:0007669"/>
    <property type="project" value="UniProtKB-ARBA"/>
</dbReference>
<dbReference type="GO" id="GO:0008295">
    <property type="term" value="P:spermidine biosynthetic process"/>
    <property type="evidence" value="ECO:0007669"/>
    <property type="project" value="UniProtKB-UniRule"/>
</dbReference>
<dbReference type="CDD" id="cd02440">
    <property type="entry name" value="AdoMet_MTases"/>
    <property type="match status" value="1"/>
</dbReference>
<dbReference type="FunFam" id="3.40.50.150:FF:000088">
    <property type="entry name" value="Polyamine aminopropyltransferase"/>
    <property type="match status" value="1"/>
</dbReference>
<dbReference type="Gene3D" id="2.30.140.10">
    <property type="entry name" value="Spermidine synthase, tetramerisation domain"/>
    <property type="match status" value="1"/>
</dbReference>
<dbReference type="Gene3D" id="3.40.50.150">
    <property type="entry name" value="Vaccinia Virus protein VP39"/>
    <property type="match status" value="1"/>
</dbReference>
<dbReference type="HAMAP" id="MF_00198">
    <property type="entry name" value="Spermidine_synth"/>
    <property type="match status" value="1"/>
</dbReference>
<dbReference type="InterPro" id="IPR030374">
    <property type="entry name" value="PABS"/>
</dbReference>
<dbReference type="InterPro" id="IPR029063">
    <property type="entry name" value="SAM-dependent_MTases_sf"/>
</dbReference>
<dbReference type="InterPro" id="IPR001045">
    <property type="entry name" value="Spermi_synthase"/>
</dbReference>
<dbReference type="InterPro" id="IPR035246">
    <property type="entry name" value="Spermidine_synt_N"/>
</dbReference>
<dbReference type="InterPro" id="IPR037163">
    <property type="entry name" value="Spermidine_synt_N_sf"/>
</dbReference>
<dbReference type="NCBIfam" id="NF037959">
    <property type="entry name" value="MFS_SpdSyn"/>
    <property type="match status" value="1"/>
</dbReference>
<dbReference type="PANTHER" id="PTHR43317">
    <property type="entry name" value="THERMOSPERMINE SYNTHASE ACAULIS5"/>
    <property type="match status" value="1"/>
</dbReference>
<dbReference type="PANTHER" id="PTHR43317:SF1">
    <property type="entry name" value="THERMOSPERMINE SYNTHASE ACAULIS5"/>
    <property type="match status" value="1"/>
</dbReference>
<dbReference type="Pfam" id="PF17284">
    <property type="entry name" value="Spermine_synt_N"/>
    <property type="match status" value="1"/>
</dbReference>
<dbReference type="Pfam" id="PF01564">
    <property type="entry name" value="Spermine_synth"/>
    <property type="match status" value="1"/>
</dbReference>
<dbReference type="SUPFAM" id="SSF53335">
    <property type="entry name" value="S-adenosyl-L-methionine-dependent methyltransferases"/>
    <property type="match status" value="1"/>
</dbReference>
<dbReference type="PROSITE" id="PS51006">
    <property type="entry name" value="PABS_2"/>
    <property type="match status" value="1"/>
</dbReference>
<name>SPEE_SYNJB</name>
<gene>
    <name evidence="1" type="primary">speE</name>
    <name type="ordered locus">CYB_0058</name>
</gene>
<evidence type="ECO:0000255" key="1">
    <source>
        <dbReference type="HAMAP-Rule" id="MF_00198"/>
    </source>
</evidence>
<accession>Q2JQ57</accession>
<reference key="1">
    <citation type="journal article" date="2007" name="ISME J.">
        <title>Population level functional diversity in a microbial community revealed by comparative genomic and metagenomic analyses.</title>
        <authorList>
            <person name="Bhaya D."/>
            <person name="Grossman A.R."/>
            <person name="Steunou A.-S."/>
            <person name="Khuri N."/>
            <person name="Cohan F.M."/>
            <person name="Hamamura N."/>
            <person name="Melendrez M.C."/>
            <person name="Bateson M.M."/>
            <person name="Ward D.M."/>
            <person name="Heidelberg J.F."/>
        </authorList>
    </citation>
    <scope>NUCLEOTIDE SEQUENCE [LARGE SCALE GENOMIC DNA]</scope>
    <source>
        <strain>JA-2-3B'a(2-13)</strain>
    </source>
</reference>
<proteinExistence type="inferred from homology"/>
<feature type="chain" id="PRO_1000012024" description="Polyamine aminopropyltransferase">
    <location>
        <begin position="1"/>
        <end position="312"/>
    </location>
</feature>
<feature type="domain" description="PABS" evidence="1">
    <location>
        <begin position="7"/>
        <end position="247"/>
    </location>
</feature>
<feature type="active site" description="Proton acceptor" evidence="1">
    <location>
        <position position="165"/>
    </location>
</feature>
<feature type="binding site" evidence="1">
    <location>
        <position position="36"/>
    </location>
    <ligand>
        <name>S-methyl-5'-thioadenosine</name>
        <dbReference type="ChEBI" id="CHEBI:17509"/>
    </ligand>
</feature>
<feature type="binding site" evidence="1">
    <location>
        <position position="67"/>
    </location>
    <ligand>
        <name>spermidine</name>
        <dbReference type="ChEBI" id="CHEBI:57834"/>
    </ligand>
</feature>
<feature type="binding site" evidence="1">
    <location>
        <position position="95"/>
    </location>
    <ligand>
        <name>spermidine</name>
        <dbReference type="ChEBI" id="CHEBI:57834"/>
    </ligand>
</feature>
<feature type="binding site" evidence="1">
    <location>
        <position position="115"/>
    </location>
    <ligand>
        <name>S-methyl-5'-thioadenosine</name>
        <dbReference type="ChEBI" id="CHEBI:17509"/>
    </ligand>
</feature>
<feature type="binding site" evidence="1">
    <location>
        <begin position="147"/>
        <end position="148"/>
    </location>
    <ligand>
        <name>S-methyl-5'-thioadenosine</name>
        <dbReference type="ChEBI" id="CHEBI:17509"/>
    </ligand>
</feature>
<feature type="binding site" evidence="1">
    <location>
        <position position="174"/>
    </location>
    <ligand>
        <name>S-methyl-5'-thioadenosine</name>
        <dbReference type="ChEBI" id="CHEBI:17509"/>
    </ligand>
</feature>
<keyword id="KW-0963">Cytoplasm</keyword>
<keyword id="KW-0620">Polyamine biosynthesis</keyword>
<keyword id="KW-1185">Reference proteome</keyword>
<keyword id="KW-0745">Spermidine biosynthesis</keyword>
<keyword id="KW-0808">Transferase</keyword>